<proteinExistence type="evidence at protein level"/>
<protein>
    <recommendedName>
        <fullName evidence="3">Alkane uptake protein B</fullName>
    </recommendedName>
</protein>
<gene>
    <name evidence="3" type="primary">aupB</name>
    <name evidence="4" type="ORF">MARHY0477</name>
</gene>
<accession>H8WEC0</accession>
<dbReference type="EMBL" id="FO203363">
    <property type="protein sequence ID" value="CCG93976.1"/>
    <property type="molecule type" value="Genomic_DNA"/>
</dbReference>
<dbReference type="RefSeq" id="WP_014420411.1">
    <property type="nucleotide sequence ID" value="NC_017067.1"/>
</dbReference>
<dbReference type="GeneID" id="31820000"/>
<dbReference type="KEGG" id="mhc:MARHY0477"/>
<dbReference type="PATRIC" id="fig|2743.3.peg.468"/>
<dbReference type="HOGENOM" id="CLU_278074_0_0_6"/>
<dbReference type="GO" id="GO:0005886">
    <property type="term" value="C:plasma membrane"/>
    <property type="evidence" value="ECO:0007669"/>
    <property type="project" value="UniProtKB-SubCell"/>
</dbReference>
<dbReference type="Gene3D" id="2.60.40.1220">
    <property type="match status" value="1"/>
</dbReference>
<dbReference type="InterPro" id="IPR014755">
    <property type="entry name" value="Cu-Rt/internalin_Ig-like"/>
</dbReference>
<dbReference type="InterPro" id="IPR032812">
    <property type="entry name" value="SbsA_Ig"/>
</dbReference>
<dbReference type="Pfam" id="PF13205">
    <property type="entry name" value="Big_5"/>
    <property type="match status" value="2"/>
</dbReference>
<dbReference type="PROSITE" id="PS51257">
    <property type="entry name" value="PROKAR_LIPOPROTEIN"/>
    <property type="match status" value="1"/>
</dbReference>
<organism>
    <name type="scientific">Marinobacter nauticus (strain ATCC 49840 / DSM 8798 / CIP 103578 / SP17)</name>
    <name type="common">Marinobacter hydrocarbonoclasticus</name>
    <dbReference type="NCBI Taxonomy" id="1163748"/>
    <lineage>
        <taxon>Bacteria</taxon>
        <taxon>Pseudomonadati</taxon>
        <taxon>Pseudomonadota</taxon>
        <taxon>Gammaproteobacteria</taxon>
        <taxon>Pseudomonadales</taxon>
        <taxon>Marinobacteraceae</taxon>
        <taxon>Marinobacter</taxon>
    </lineage>
</organism>
<reference key="1">
    <citation type="journal article" date="2012" name="J. Bacteriol.">
        <title>Genome sequence of the marine bacterium Marinobacter hydrocarbonoclasticus SP17, which forms biofilms on hydrophobic organic compounds.</title>
        <authorList>
            <person name="Grimaud R."/>
            <person name="Ghiglione J.F."/>
            <person name="Cagnon C."/>
            <person name="Lauga B."/>
            <person name="Vaysse P.J."/>
            <person name="Rodriguez-Blanco A."/>
            <person name="Mangenot S."/>
            <person name="Cruveiller S."/>
            <person name="Barbe V."/>
            <person name="Duran R."/>
            <person name="Wu L.F."/>
            <person name="Talla E."/>
            <person name="Bonin P."/>
            <person name="Michotey V."/>
        </authorList>
    </citation>
    <scope>NUCLEOTIDE SEQUENCE [LARGE SCALE GENOMIC DNA]</scope>
    <source>
        <strain>ATCC 49840 / DSM 8798 / CIP 103578 / SP17</strain>
    </source>
</reference>
<reference key="2">
    <citation type="journal article" date="2018" name="MBio">
        <title>AupA and AupB are outer and inner membrane proteins involved in alkane uptake in Marinobacter hydrocarbonoclasticus SP17.</title>
        <authorList>
            <person name="Mounier J."/>
            <person name="Hakil F."/>
            <person name="Branchu P."/>
            <person name="Naitali M."/>
            <person name="Goulas P."/>
            <person name="Sivadon P."/>
            <person name="Grimaud R."/>
        </authorList>
    </citation>
    <scope>FUNCTION</scope>
    <scope>INTERACTION WITH AUPA</scope>
    <scope>SUBCELLULAR LOCATION</scope>
    <scope>INDUCTION</scope>
    <scope>DISRUPTION PHENOTYPE</scope>
    <source>
        <strain>ATCC 49840 / DSM 8798 / CIP 103578 / SP17</strain>
    </source>
</reference>
<keyword id="KW-0997">Cell inner membrane</keyword>
<keyword id="KW-1003">Cell membrane</keyword>
<keyword id="KW-0449">Lipoprotein</keyword>
<keyword id="KW-0472">Membrane</keyword>
<keyword id="KW-0564">Palmitate</keyword>
<keyword id="KW-0732">Signal</keyword>
<keyword id="KW-0813">Transport</keyword>
<name>AUPB_MARN1</name>
<comment type="function">
    <text evidence="2">Required for growth on alkanes. Probably involved in the uptake of micelle-solubilized alkanes. May facilitate the transfer of alkanes from the outer membrane to the inner membrane.</text>
</comment>
<comment type="subunit">
    <text evidence="2">Interacts with the outer membrane protein AupA.</text>
</comment>
<comment type="subcellular location">
    <subcellularLocation>
        <location evidence="2">Cell inner membrane</location>
        <topology evidence="1">Lipid-anchor</topology>
    </subcellularLocation>
</comment>
<comment type="induction">
    <text evidence="2">Expression increases during biofilm formation on n-hexadecane. Forms an operon with aupA.</text>
</comment>
<comment type="disruption phenotype">
    <text evidence="2">Mutants show a lower rate of biofilm formation on solid paraffin and on the liquid alkane n-hexadecane, while growth on nonalkane substrates was not affected. Planktonic growth on water-soluble substrates is not affected. Mutants are impaired in the assimilation of n-hexadecane solubilized in surfactant micelles.</text>
</comment>
<evidence type="ECO:0000255" key="1">
    <source>
        <dbReference type="PROSITE-ProRule" id="PRU00303"/>
    </source>
</evidence>
<evidence type="ECO:0000269" key="2">
    <source>
    </source>
</evidence>
<evidence type="ECO:0000303" key="3">
    <source>
    </source>
</evidence>
<evidence type="ECO:0000312" key="4">
    <source>
        <dbReference type="EMBL" id="CCG93976.1"/>
    </source>
</evidence>
<feature type="signal peptide" evidence="1">
    <location>
        <begin position="1"/>
        <end position="17"/>
    </location>
</feature>
<feature type="chain" id="PRO_0000445086" description="Alkane uptake protein B" evidence="1">
    <location>
        <begin position="18"/>
        <end position="1063"/>
    </location>
</feature>
<feature type="lipid moiety-binding region" description="N-palmitoyl cysteine" evidence="1">
    <location>
        <position position="18"/>
    </location>
</feature>
<feature type="lipid moiety-binding region" description="S-diacylglycerol cysteine" evidence="1">
    <location>
        <position position="18"/>
    </location>
</feature>
<sequence>MKYNKTLALIPAILLAACGGGDKQSIDEKPRPGSMVYSFPMDGQADVSPKADIVLRFSHAITDDEATLQNKIILQSSGQSQPFTVTLIDSGKSLKLEPANPLATGEEFTVTFQEPLAAEGGRQITTPNATGDDGIQFATRGAYAGLAELANTADTFDIAWQVPASDSPFQAMNFSTFRFAMTQPVHPEWQSLGGSIQLRDASGQEVPATVLVKGNRITVDPCVTPEPSQCGSKQDILNTGETYTLQLTNLASLTDSSEENRFTGEFTFTPRDTGPTVVLQQTAVDSGNGELTSVLNGQALNAVTLNSVLQGEAGPSQQTGDLFAELAYAPAFDADEALPLRIPKGSVLKSTSLNVLVGGKVQVLDAATGEDQQTGTIKVTMLSDASGYMSPNQYTDDINAPRHITLFMDVSMNTEAAQPNAALSQDLMGVELRGIALVRDGVLTIDAIGMVEPNLLGQEFTDSTIAFHLQAATDADSVLDAENLRELDATPPSLVSWMPGPANAVPATRQSMQRPGDPIILFFDEPLDPASVENGVELIENGAPVTNLQARLDGTALVLNPQGGLKHGVPYSVSVDGLTDLAGNRAMVSPLSFELDSIEENGSPGNKGFPLALTTYPGYPCETDYENTLDLENGVFGKCWTADANNAGDVLPVSKMPADRPITVVFSKSLDLDSVIVGETFTVQEIAQEANGTVTVLNQQVAGRLEKNNQRIRFYPEQPWQVGAHYRYILASSEQSGTCTPGQYTSICDEDGIPLKTDLLEGLNDGDGNNGPDNLEIVFTGSEARSTVFTPLRNLPIRDTNSNLAIDCDDLGSESCLEPFNHQGSDSEGFLPSANAAKLLVTQDHAEDARVGCAVDGADCPRKKFIYQTYALNTEVIGPTVDPDTGRDAVKVLLYPTQLATTSLDVHLSLLSTVSSTGPQVLRMRYAKDDPECTGASCARNSLIPGYITENDQGETIFKTKAELFLDAPGLKATASILGIPTDLPLTHNLFGYPFTLELEGRVVFFDDGRMQIEQRNFNVPHIDVEAVALGIINTEIPLIIPEQGVYLNFISNPVKEIPAQYE</sequence>